<evidence type="ECO:0000250" key="1"/>
<evidence type="ECO:0000250" key="2">
    <source>
        <dbReference type="UniProtKB" id="P01730"/>
    </source>
</evidence>
<evidence type="ECO:0000255" key="3"/>
<evidence type="ECO:0000255" key="4">
    <source>
        <dbReference type="PROSITE-ProRule" id="PRU00114"/>
    </source>
</evidence>
<evidence type="ECO:0000256" key="5">
    <source>
        <dbReference type="SAM" id="MobiDB-lite"/>
    </source>
</evidence>
<evidence type="ECO:0000269" key="6">
    <source>
    </source>
</evidence>
<comment type="function">
    <text evidence="2">Integral membrane glycoprotein that plays an essential role in the immune response and serves multiple functions in responses against both external and internal offenses. In T-cells, functions primarily as a coreceptor for MHC class II molecule:peptide complex. The antigens presented by class II peptides are derived from extracellular proteins while class I peptides are derived from cytosolic proteins. Interacts simultaneously with the T-cell receptor (TCR) and the MHC class II presented by antigen presenting cells (APCs). In turn, recruits the Src kinase LCK to the vicinity of the TCR-CD3 complex. LCK then initiates different intracellular signaling pathways by phosphorylating various substrates ultimately leading to lymphokine production, motility, adhesion and activation of T-helper cells. In other cells such as macrophages or NK cells, plays a role in differentiation/activation, cytokine expression and cell migration in a TCR/LCK-independent pathway. Participates in the development of T-helper cells in the thymus and triggers the differentiation of monocytes into functional mature macrophages.</text>
</comment>
<comment type="subunit">
    <text evidence="2">Forms disulfide-linked homodimers at the cell surface. Interacts with LCK. Interacts with PTK2/FAK1. Binds to P4HB/PDI. Interacts with IL16; this interaction induces a CD4-dependent signaling in lymphocytes. Interacts (via Ig-like V-type domain) with MHCII alpha chain (via alpha-2 domain) and beta chain (via beta-2 domain); this interaction increases the affinity of TCR for peptide-MHCII. CD4 oligomerization via Ig-like C2-type 2 and 3 domains appears to be required for stable binding to MHCII and adhesion between T cells and APCs.</text>
</comment>
<comment type="subcellular location">
    <subcellularLocation>
        <location evidence="2">Cell membrane</location>
        <topology evidence="2">Single-pass type I membrane protein</topology>
    </subcellularLocation>
    <text evidence="2">Localizes to lipid rafts.</text>
</comment>
<comment type="tissue specificity">
    <text evidence="6">Expressed in macrophages and a subset of T lymphocytes.</text>
</comment>
<comment type="domain">
    <text evidence="2">The Ig-like V-type domain mediates the interaction with MHCII.</text>
</comment>
<comment type="PTM">
    <text evidence="2">Palmitoylation and association with LCK contribute to the enrichment of CD4 in lipid rafts.</text>
</comment>
<comment type="PTM">
    <text evidence="2">Phosphorylated by PKC; phosphorylation plays an important role for CD4 internalization.</text>
</comment>
<protein>
    <recommendedName>
        <fullName>T-cell surface glycoprotein CD4</fullName>
    </recommendedName>
    <alternativeName>
        <fullName>T-cell surface antigen T4/Leu-3</fullName>
    </alternativeName>
    <cdAntigenName>CD4</cdAntigenName>
</protein>
<sequence>MNQEAAFRHLLLMLQLVMLPAVTPVREVVLGKAGDAVELPCQTSQKKNIHFNWRDSSMVQILGNQGSFWTVGSSRLKHRVESKKNLWDQGSFPLVIKDLEVADSGIYFCDTDKRQEVELLVFNLTAKWDSGSSSGSSNIRLLQGQQLTLTLENPSGSSPSVQWKGPGNKSKHGGQNLSLSWPELQDGGTWTCIISQSQKTVEFNINVLVLAFQKVSNTFYAREGDQVEFSFPLSFEDENLVGELRWQAQGASSSLLWISFTLENRKLSMKEAHAPLKLQMKESLPLRFTLPQVLSRYAGSGILTLNLAKGTLYQEVNLVVMRANSSQNNLTCEVLGPTSPELTLSLNLKEQAAKVSKQQKLVWVVDPEGGTWQCLLSDKDKVLLASSLNVSSPVVIKSWPKFLAITLGGILGLLLLIGLCVFCCVKCWRRRRQAERMSQIKRLLSEKKTCQCSHRIQKTCSLI</sequence>
<gene>
    <name type="primary">CD4</name>
</gene>
<reference key="1">
    <citation type="journal article" date="1994" name="Tissue Antigens">
        <title>Isolation and expression of cDNA encoding the canine CD4 and CD8 alpha antigens.</title>
        <authorList>
            <person name="Gorman S.D."/>
            <person name="Frewin M.R."/>
            <person name="Cobbold S.P."/>
            <person name="Waldmann H."/>
        </authorList>
    </citation>
    <scope>NUCLEOTIDE SEQUENCE [MRNA]</scope>
    <scope>TISSUE SPECIFICITY</scope>
    <source>
        <strain>Beagle</strain>
        <tissue>Thymus</tissue>
    </source>
</reference>
<reference key="2">
    <citation type="journal article" date="1993" name="Biochim. Biophys. Acta">
        <title>Primary structure of the canine CD4 antigen.</title>
        <authorList>
            <person name="Milde K.F."/>
            <person name="Conner G.E."/>
            <person name="Minz D.H."/>
            <person name="Alejandro R."/>
        </authorList>
    </citation>
    <scope>NUCLEOTIDE SEQUENCE [MRNA] OF 13-463</scope>
    <source>
        <strain>Beagle</strain>
        <tissue>Thymus</tissue>
    </source>
</reference>
<proteinExistence type="evidence at transcript level"/>
<accession>P33705</accession>
<keyword id="KW-1064">Adaptive immunity</keyword>
<keyword id="KW-1003">Cell membrane</keyword>
<keyword id="KW-1015">Disulfide bond</keyword>
<keyword id="KW-0325">Glycoprotein</keyword>
<keyword id="KW-0391">Immunity</keyword>
<keyword id="KW-0393">Immunoglobulin domain</keyword>
<keyword id="KW-0449">Lipoprotein</keyword>
<keyword id="KW-0472">Membrane</keyword>
<keyword id="KW-0564">Palmitate</keyword>
<keyword id="KW-0597">Phosphoprotein</keyword>
<keyword id="KW-1185">Reference proteome</keyword>
<keyword id="KW-0677">Repeat</keyword>
<keyword id="KW-0732">Signal</keyword>
<keyword id="KW-0812">Transmembrane</keyword>
<keyword id="KW-1133">Transmembrane helix</keyword>
<name>CD4_CANLF</name>
<organism>
    <name type="scientific">Canis lupus familiaris</name>
    <name type="common">Dog</name>
    <name type="synonym">Canis familiaris</name>
    <dbReference type="NCBI Taxonomy" id="9615"/>
    <lineage>
        <taxon>Eukaryota</taxon>
        <taxon>Metazoa</taxon>
        <taxon>Chordata</taxon>
        <taxon>Craniata</taxon>
        <taxon>Vertebrata</taxon>
        <taxon>Euteleostomi</taxon>
        <taxon>Mammalia</taxon>
        <taxon>Eutheria</taxon>
        <taxon>Laurasiatheria</taxon>
        <taxon>Carnivora</taxon>
        <taxon>Caniformia</taxon>
        <taxon>Canidae</taxon>
        <taxon>Canis</taxon>
    </lineage>
</organism>
<dbReference type="EMBL" id="X68565">
    <property type="status" value="NOT_ANNOTATED_CDS"/>
    <property type="molecule type" value="mRNA"/>
</dbReference>
<dbReference type="EMBL" id="L06130">
    <property type="protein sequence ID" value="AAB02295.1"/>
    <property type="molecule type" value="mRNA"/>
</dbReference>
<dbReference type="RefSeq" id="NP_001003252.1">
    <property type="nucleotide sequence ID" value="NM_001003252.1"/>
</dbReference>
<dbReference type="RefSeq" id="XP_038293674.1">
    <property type="nucleotide sequence ID" value="XM_038437746.1"/>
</dbReference>
<dbReference type="SMR" id="P33705"/>
<dbReference type="FunCoup" id="P33705">
    <property type="interactions" value="70"/>
</dbReference>
<dbReference type="STRING" id="9615.ENSCAFP00000063394"/>
<dbReference type="GlyCosmos" id="P33705">
    <property type="glycosylation" value="6 sites, No reported glycans"/>
</dbReference>
<dbReference type="PaxDb" id="9615-ENSCAFP00000063394"/>
<dbReference type="Ensembl" id="ENSCAFT00000077975.2">
    <property type="protein sequence ID" value="ENSCAFP00000063394.2"/>
    <property type="gene ID" value="ENSCAFG00000041713.2"/>
</dbReference>
<dbReference type="Ensembl" id="ENSCAFT00030040954.1">
    <property type="protein sequence ID" value="ENSCAFP00030035742.1"/>
    <property type="gene ID" value="ENSCAFG00030022291.1"/>
</dbReference>
<dbReference type="Ensembl" id="ENSCAFT00040044806.1">
    <property type="protein sequence ID" value="ENSCAFP00040039142.1"/>
    <property type="gene ID" value="ENSCAFG00040024046.1"/>
</dbReference>
<dbReference type="Ensembl" id="ENSCAFT00845048936.1">
    <property type="protein sequence ID" value="ENSCAFP00845038388.1"/>
    <property type="gene ID" value="ENSCAFG00845027739.1"/>
</dbReference>
<dbReference type="GeneID" id="403931"/>
<dbReference type="KEGG" id="cfa:403931"/>
<dbReference type="CTD" id="920"/>
<dbReference type="VEuPathDB" id="HostDB:ENSCAFG00845027739"/>
<dbReference type="VGNC" id="VGNC:111398">
    <property type="gene designation" value="CD4"/>
</dbReference>
<dbReference type="GeneTree" id="ENSGT00390000001745"/>
<dbReference type="InParanoid" id="P33705"/>
<dbReference type="OrthoDB" id="8657369at2759"/>
<dbReference type="Reactome" id="R-CFA-202424">
    <property type="pathway name" value="Downstream TCR signaling"/>
</dbReference>
<dbReference type="Reactome" id="R-CFA-202427">
    <property type="pathway name" value="Phosphorylation of CD3 and TCR zeta chains"/>
</dbReference>
<dbReference type="Reactome" id="R-CFA-202430">
    <property type="pathway name" value="Translocation of ZAP-70 to Immunological synapse"/>
</dbReference>
<dbReference type="Reactome" id="R-CFA-202433">
    <property type="pathway name" value="Generation of second messenger molecules"/>
</dbReference>
<dbReference type="Reactome" id="R-CFA-389948">
    <property type="pathway name" value="Co-inhibition by PD-1"/>
</dbReference>
<dbReference type="Reactome" id="R-CFA-449836">
    <property type="pathway name" value="Other interleukin signaling"/>
</dbReference>
<dbReference type="Reactome" id="R-CFA-8856825">
    <property type="pathway name" value="Cargo recognition for clathrin-mediated endocytosis"/>
</dbReference>
<dbReference type="Reactome" id="R-CFA-8856828">
    <property type="pathway name" value="Clathrin-mediated endocytosis"/>
</dbReference>
<dbReference type="Proteomes" id="UP000002254">
    <property type="component" value="Chromosome 27"/>
</dbReference>
<dbReference type="Proteomes" id="UP000694429">
    <property type="component" value="Chromosome 27"/>
</dbReference>
<dbReference type="Proteomes" id="UP000694542">
    <property type="component" value="Chromosome 27"/>
</dbReference>
<dbReference type="Proteomes" id="UP000805418">
    <property type="component" value="Chromosome 27"/>
</dbReference>
<dbReference type="GO" id="GO:0009897">
    <property type="term" value="C:external side of plasma membrane"/>
    <property type="evidence" value="ECO:0007669"/>
    <property type="project" value="Ensembl"/>
</dbReference>
<dbReference type="GO" id="GO:0045121">
    <property type="term" value="C:membrane raft"/>
    <property type="evidence" value="ECO:0007669"/>
    <property type="project" value="Ensembl"/>
</dbReference>
<dbReference type="GO" id="GO:0015026">
    <property type="term" value="F:coreceptor activity"/>
    <property type="evidence" value="ECO:0007669"/>
    <property type="project" value="InterPro"/>
</dbReference>
<dbReference type="GO" id="GO:0042011">
    <property type="term" value="F:interleukin-16 binding"/>
    <property type="evidence" value="ECO:0007669"/>
    <property type="project" value="Ensembl"/>
</dbReference>
<dbReference type="GO" id="GO:0042012">
    <property type="term" value="F:interleukin-16 receptor activity"/>
    <property type="evidence" value="ECO:0007669"/>
    <property type="project" value="Ensembl"/>
</dbReference>
<dbReference type="GO" id="GO:0042289">
    <property type="term" value="F:MHC class II protein binding"/>
    <property type="evidence" value="ECO:0007669"/>
    <property type="project" value="Ensembl"/>
</dbReference>
<dbReference type="GO" id="GO:0023026">
    <property type="term" value="F:MHC class II protein complex binding"/>
    <property type="evidence" value="ECO:0000250"/>
    <property type="project" value="UniProtKB"/>
</dbReference>
<dbReference type="GO" id="GO:0042803">
    <property type="term" value="F:protein homodimerization activity"/>
    <property type="evidence" value="ECO:0007669"/>
    <property type="project" value="Ensembl"/>
</dbReference>
<dbReference type="GO" id="GO:1990782">
    <property type="term" value="F:protein tyrosine kinase binding"/>
    <property type="evidence" value="ECO:0007669"/>
    <property type="project" value="Ensembl"/>
</dbReference>
<dbReference type="GO" id="GO:0008270">
    <property type="term" value="F:zinc ion binding"/>
    <property type="evidence" value="ECO:0007669"/>
    <property type="project" value="Ensembl"/>
</dbReference>
<dbReference type="GO" id="GO:0002250">
    <property type="term" value="P:adaptive immune response"/>
    <property type="evidence" value="ECO:0007669"/>
    <property type="project" value="UniProtKB-KW"/>
</dbReference>
<dbReference type="GO" id="GO:0007155">
    <property type="term" value="P:cell adhesion"/>
    <property type="evidence" value="ECO:0007669"/>
    <property type="project" value="InterPro"/>
</dbReference>
<dbReference type="GO" id="GO:0097011">
    <property type="term" value="P:cellular response to granulocyte macrophage colony-stimulating factor stimulus"/>
    <property type="evidence" value="ECO:0007669"/>
    <property type="project" value="Ensembl"/>
</dbReference>
<dbReference type="GO" id="GO:0035723">
    <property type="term" value="P:interleukin-15-mediated signaling pathway"/>
    <property type="evidence" value="ECO:0007669"/>
    <property type="project" value="Ensembl"/>
</dbReference>
<dbReference type="GO" id="GO:0030225">
    <property type="term" value="P:macrophage differentiation"/>
    <property type="evidence" value="ECO:0007669"/>
    <property type="project" value="Ensembl"/>
</dbReference>
<dbReference type="GO" id="GO:0032507">
    <property type="term" value="P:maintenance of protein location in cell"/>
    <property type="evidence" value="ECO:0007669"/>
    <property type="project" value="Ensembl"/>
</dbReference>
<dbReference type="GO" id="GO:0043123">
    <property type="term" value="P:positive regulation of canonical NF-kappaB signal transduction"/>
    <property type="evidence" value="ECO:0007669"/>
    <property type="project" value="Ensembl"/>
</dbReference>
<dbReference type="GO" id="GO:0045893">
    <property type="term" value="P:positive regulation of DNA-templated transcription"/>
    <property type="evidence" value="ECO:0007669"/>
    <property type="project" value="Ensembl"/>
</dbReference>
<dbReference type="GO" id="GO:0070374">
    <property type="term" value="P:positive regulation of ERK1 and ERK2 cascade"/>
    <property type="evidence" value="ECO:0007669"/>
    <property type="project" value="Ensembl"/>
</dbReference>
<dbReference type="GO" id="GO:0045657">
    <property type="term" value="P:positive regulation of monocyte differentiation"/>
    <property type="evidence" value="ECO:0007669"/>
    <property type="project" value="Ensembl"/>
</dbReference>
<dbReference type="GO" id="GO:0046598">
    <property type="term" value="P:positive regulation of viral entry into host cell"/>
    <property type="evidence" value="ECO:0007669"/>
    <property type="project" value="Ensembl"/>
</dbReference>
<dbReference type="GO" id="GO:0051924">
    <property type="term" value="P:regulation of calcium ion transport"/>
    <property type="evidence" value="ECO:0007669"/>
    <property type="project" value="Ensembl"/>
</dbReference>
<dbReference type="GO" id="GO:0050863">
    <property type="term" value="P:regulation of T cell activation"/>
    <property type="evidence" value="ECO:0007669"/>
    <property type="project" value="Ensembl"/>
</dbReference>
<dbReference type="GO" id="GO:0030217">
    <property type="term" value="P:T cell differentiation"/>
    <property type="evidence" value="ECO:0000250"/>
    <property type="project" value="UniProtKB"/>
</dbReference>
<dbReference type="GO" id="GO:0045058">
    <property type="term" value="P:T cell selection"/>
    <property type="evidence" value="ECO:0000250"/>
    <property type="project" value="UniProtKB"/>
</dbReference>
<dbReference type="CDD" id="cd22570">
    <property type="entry name" value="CD4_CD"/>
    <property type="match status" value="1"/>
</dbReference>
<dbReference type="FunFam" id="1.20.5.900:FF:000001">
    <property type="entry name" value="T-cell surface glycoprotein CD4"/>
    <property type="match status" value="1"/>
</dbReference>
<dbReference type="FunFam" id="2.60.40.10:FF:001105">
    <property type="entry name" value="T-cell surface glycoprotein CD4"/>
    <property type="match status" value="1"/>
</dbReference>
<dbReference type="FunFam" id="2.60.40.10:FF:001221">
    <property type="entry name" value="T-cell surface glycoprotein CD4"/>
    <property type="match status" value="1"/>
</dbReference>
<dbReference type="FunFam" id="2.60.40.10:FF:001253">
    <property type="entry name" value="T-cell surface glycoprotein CD4"/>
    <property type="match status" value="1"/>
</dbReference>
<dbReference type="Gene3D" id="2.60.40.10">
    <property type="entry name" value="Immunoglobulins"/>
    <property type="match status" value="4"/>
</dbReference>
<dbReference type="Gene3D" id="1.20.5.900">
    <property type="entry name" value="transmembrane domain of human cd4"/>
    <property type="match status" value="1"/>
</dbReference>
<dbReference type="InterPro" id="IPR000973">
    <property type="entry name" value="CD4"/>
</dbReference>
<dbReference type="InterPro" id="IPR015274">
    <property type="entry name" value="CD4-extracel"/>
</dbReference>
<dbReference type="InterPro" id="IPR007110">
    <property type="entry name" value="Ig-like_dom"/>
</dbReference>
<dbReference type="InterPro" id="IPR036179">
    <property type="entry name" value="Ig-like_dom_sf"/>
</dbReference>
<dbReference type="InterPro" id="IPR013783">
    <property type="entry name" value="Ig-like_fold"/>
</dbReference>
<dbReference type="InterPro" id="IPR008424">
    <property type="entry name" value="Ig_C2-set"/>
</dbReference>
<dbReference type="InterPro" id="IPR003599">
    <property type="entry name" value="Ig_sub"/>
</dbReference>
<dbReference type="InterPro" id="IPR013106">
    <property type="entry name" value="Ig_V-set"/>
</dbReference>
<dbReference type="InterPro" id="IPR013151">
    <property type="entry name" value="Immunoglobulin_dom"/>
</dbReference>
<dbReference type="InterPro" id="IPR021963">
    <property type="entry name" value="Tcell_CD4_Cterm"/>
</dbReference>
<dbReference type="PANTHER" id="PTHR11422">
    <property type="entry name" value="T-CELL SURFACE GLYCOPROTEIN CD4"/>
    <property type="match status" value="1"/>
</dbReference>
<dbReference type="PANTHER" id="PTHR11422:SF0">
    <property type="entry name" value="T-CELL SURFACE GLYCOPROTEIN CD4"/>
    <property type="match status" value="1"/>
</dbReference>
<dbReference type="Pfam" id="PF05790">
    <property type="entry name" value="C2-set"/>
    <property type="match status" value="2"/>
</dbReference>
<dbReference type="Pfam" id="PF09191">
    <property type="entry name" value="CD4-extracel"/>
    <property type="match status" value="1"/>
</dbReference>
<dbReference type="Pfam" id="PF00047">
    <property type="entry name" value="ig"/>
    <property type="match status" value="1"/>
</dbReference>
<dbReference type="Pfam" id="PF12104">
    <property type="entry name" value="Tcell_CD4_C"/>
    <property type="match status" value="1"/>
</dbReference>
<dbReference type="PRINTS" id="PR00692">
    <property type="entry name" value="CD4TCANTIGEN"/>
</dbReference>
<dbReference type="SMART" id="SM00409">
    <property type="entry name" value="IG"/>
    <property type="match status" value="3"/>
</dbReference>
<dbReference type="SMART" id="SM00406">
    <property type="entry name" value="IGv"/>
    <property type="match status" value="1"/>
</dbReference>
<dbReference type="SUPFAM" id="SSF48726">
    <property type="entry name" value="Immunoglobulin"/>
    <property type="match status" value="4"/>
</dbReference>
<dbReference type="PROSITE" id="PS50835">
    <property type="entry name" value="IG_LIKE"/>
    <property type="match status" value="1"/>
</dbReference>
<feature type="signal peptide" evidence="3">
    <location>
        <begin position="1"/>
        <end position="24"/>
    </location>
</feature>
<feature type="chain" id="PRO_0000014619" description="T-cell surface glycoprotein CD4">
    <location>
        <begin position="25"/>
        <end position="463"/>
    </location>
</feature>
<feature type="topological domain" description="Extracellular" evidence="3">
    <location>
        <begin position="25"/>
        <end position="401"/>
    </location>
</feature>
<feature type="transmembrane region" description="Helical" evidence="3">
    <location>
        <begin position="402"/>
        <end position="423"/>
    </location>
</feature>
<feature type="topological domain" description="Cytoplasmic" evidence="3">
    <location>
        <begin position="424"/>
        <end position="463"/>
    </location>
</feature>
<feature type="domain" description="Ig-like V-type">
    <location>
        <begin position="26"/>
        <end position="124"/>
    </location>
</feature>
<feature type="domain" description="Ig-like C2-type 1">
    <location>
        <begin position="125"/>
        <end position="211"/>
    </location>
</feature>
<feature type="domain" description="Ig-like C2-type 2">
    <location>
        <begin position="212"/>
        <end position="321"/>
    </location>
</feature>
<feature type="domain" description="Ig-like C2-type 3">
    <location>
        <begin position="322"/>
        <end position="378"/>
    </location>
</feature>
<feature type="region of interest" description="Disordered" evidence="5">
    <location>
        <begin position="153"/>
        <end position="178"/>
    </location>
</feature>
<feature type="modified residue" description="Phosphoserine" evidence="2">
    <location>
        <position position="438"/>
    </location>
</feature>
<feature type="modified residue" description="Phosphoserine" evidence="2">
    <location>
        <position position="445"/>
    </location>
</feature>
<feature type="modified residue" description="Phosphoserine" evidence="2">
    <location>
        <position position="461"/>
    </location>
</feature>
<feature type="lipid moiety-binding region" description="S-palmitoyl cysteine" evidence="1">
    <location>
        <position position="424"/>
    </location>
</feature>
<feature type="lipid moiety-binding region" description="S-palmitoyl cysteine" evidence="1">
    <location>
        <position position="427"/>
    </location>
</feature>
<feature type="glycosylation site" description="N-linked (GlcNAc...) asparagine" evidence="3">
    <location>
        <position position="123"/>
    </location>
</feature>
<feature type="glycosylation site" description="N-linked (GlcNAc...) asparagine" evidence="3">
    <location>
        <position position="168"/>
    </location>
</feature>
<feature type="glycosylation site" description="N-linked (GlcNAc...) asparagine" evidence="3">
    <location>
        <position position="176"/>
    </location>
</feature>
<feature type="glycosylation site" description="N-linked (GlcNAc...) asparagine" evidence="3">
    <location>
        <position position="324"/>
    </location>
</feature>
<feature type="glycosylation site" description="N-linked (GlcNAc...) asparagine" evidence="3">
    <location>
        <position position="329"/>
    </location>
</feature>
<feature type="glycosylation site" description="N-linked (GlcNAc...) asparagine" evidence="3">
    <location>
        <position position="389"/>
    </location>
</feature>
<feature type="disulfide bond" evidence="4">
    <location>
        <begin position="41"/>
        <end position="109"/>
    </location>
</feature>
<feature type="disulfide bond" evidence="4">
    <location>
        <begin position="332"/>
        <end position="374"/>
    </location>
</feature>